<protein>
    <recommendedName>
        <fullName evidence="1">NAD(P)H-quinone oxidoreductase subunit I, chloroplastic</fullName>
        <ecNumber evidence="1">7.1.1.-</ecNumber>
    </recommendedName>
    <alternativeName>
        <fullName evidence="1">NAD(P)H dehydrogenase subunit I</fullName>
        <shortName evidence="1">NDH subunit I</shortName>
    </alternativeName>
    <alternativeName>
        <fullName evidence="1">NADH-plastoquinone oxidoreductase subunit I</fullName>
    </alternativeName>
</protein>
<geneLocation type="chloroplast"/>
<proteinExistence type="inferred from homology"/>
<comment type="function">
    <text evidence="1">NDH shuttles electrons from NAD(P)H:plastoquinone, via FMN and iron-sulfur (Fe-S) centers, to quinones in the photosynthetic chain and possibly in a chloroplast respiratory chain. The immediate electron acceptor for the enzyme in this species is believed to be plastoquinone. Couples the redox reaction to proton translocation, and thus conserves the redox energy in a proton gradient.</text>
</comment>
<comment type="catalytic activity">
    <reaction evidence="1">
        <text>a plastoquinone + NADH + (n+1) H(+)(in) = a plastoquinol + NAD(+) + n H(+)(out)</text>
        <dbReference type="Rhea" id="RHEA:42608"/>
        <dbReference type="Rhea" id="RHEA-COMP:9561"/>
        <dbReference type="Rhea" id="RHEA-COMP:9562"/>
        <dbReference type="ChEBI" id="CHEBI:15378"/>
        <dbReference type="ChEBI" id="CHEBI:17757"/>
        <dbReference type="ChEBI" id="CHEBI:57540"/>
        <dbReference type="ChEBI" id="CHEBI:57945"/>
        <dbReference type="ChEBI" id="CHEBI:62192"/>
    </reaction>
</comment>
<comment type="catalytic activity">
    <reaction evidence="1">
        <text>a plastoquinone + NADPH + (n+1) H(+)(in) = a plastoquinol + NADP(+) + n H(+)(out)</text>
        <dbReference type="Rhea" id="RHEA:42612"/>
        <dbReference type="Rhea" id="RHEA-COMP:9561"/>
        <dbReference type="Rhea" id="RHEA-COMP:9562"/>
        <dbReference type="ChEBI" id="CHEBI:15378"/>
        <dbReference type="ChEBI" id="CHEBI:17757"/>
        <dbReference type="ChEBI" id="CHEBI:57783"/>
        <dbReference type="ChEBI" id="CHEBI:58349"/>
        <dbReference type="ChEBI" id="CHEBI:62192"/>
    </reaction>
</comment>
<comment type="cofactor">
    <cofactor evidence="1">
        <name>[4Fe-4S] cluster</name>
        <dbReference type="ChEBI" id="CHEBI:49883"/>
    </cofactor>
    <text evidence="1">Binds 2 [4Fe-4S] clusters per subunit.</text>
</comment>
<comment type="subunit">
    <text evidence="1">NDH is composed of at least 16 different subunits, 5 of which are encoded in the nucleus.</text>
</comment>
<comment type="subcellular location">
    <subcellularLocation>
        <location evidence="1">Plastid</location>
        <location evidence="1">Chloroplast thylakoid membrane</location>
        <topology evidence="1">Peripheral membrane protein</topology>
    </subcellularLocation>
</comment>
<comment type="similarity">
    <text evidence="1">Belongs to the complex I 23 kDa subunit family.</text>
</comment>
<keyword id="KW-0004">4Fe-4S</keyword>
<keyword id="KW-0150">Chloroplast</keyword>
<keyword id="KW-0408">Iron</keyword>
<keyword id="KW-0411">Iron-sulfur</keyword>
<keyword id="KW-0472">Membrane</keyword>
<keyword id="KW-0479">Metal-binding</keyword>
<keyword id="KW-0520">NAD</keyword>
<keyword id="KW-0521">NADP</keyword>
<keyword id="KW-0934">Plastid</keyword>
<keyword id="KW-0618">Plastoquinone</keyword>
<keyword id="KW-0874">Quinone</keyword>
<keyword id="KW-0677">Repeat</keyword>
<keyword id="KW-0793">Thylakoid</keyword>
<keyword id="KW-1278">Translocase</keyword>
<gene>
    <name evidence="1" type="primary">ndhI</name>
</gene>
<evidence type="ECO:0000255" key="1">
    <source>
        <dbReference type="HAMAP-Rule" id="MF_01351"/>
    </source>
</evidence>
<organism>
    <name type="scientific">Populus alba</name>
    <name type="common">White poplar</name>
    <dbReference type="NCBI Taxonomy" id="43335"/>
    <lineage>
        <taxon>Eukaryota</taxon>
        <taxon>Viridiplantae</taxon>
        <taxon>Streptophyta</taxon>
        <taxon>Embryophyta</taxon>
        <taxon>Tracheophyta</taxon>
        <taxon>Spermatophyta</taxon>
        <taxon>Magnoliopsida</taxon>
        <taxon>eudicotyledons</taxon>
        <taxon>Gunneridae</taxon>
        <taxon>Pentapetalae</taxon>
        <taxon>rosids</taxon>
        <taxon>fabids</taxon>
        <taxon>Malpighiales</taxon>
        <taxon>Salicaceae</taxon>
        <taxon>Saliceae</taxon>
        <taxon>Populus</taxon>
    </lineage>
</organism>
<accession>Q14FA4</accession>
<sequence>MFPMVTGFMNYGQQTIRAARYIGQSFMTTLSHVNRLPVTIQYPYEKLITSERFRGRIHFEFDKCIACEVCVRVCPIDLPVVDWELETNIRKKRLLNYSIDFGICIFCGNCVEYCPTNCLSMTEEYELSTYNRHELNYNQIALGRLPMSVIDDYTIRTILNSPQSLIKMGKPPLIKD</sequence>
<reference key="1">
    <citation type="submission" date="2005-03" db="EMBL/GenBank/DDBJ databases">
        <title>Complete structure of the chloroplast genome of Populus alba.</title>
        <authorList>
            <person name="Okumura S."/>
            <person name="Yamashita A."/>
            <person name="Kanamoto H."/>
            <person name="Hattori M."/>
            <person name="Takase H."/>
            <person name="Tomizawa K."/>
        </authorList>
    </citation>
    <scope>NUCLEOTIDE SEQUENCE [LARGE SCALE GENOMIC DNA]</scope>
</reference>
<dbReference type="EC" id="7.1.1.-" evidence="1"/>
<dbReference type="EMBL" id="AP008956">
    <property type="protein sequence ID" value="BAE97258.1"/>
    <property type="molecule type" value="Genomic_DNA"/>
</dbReference>
<dbReference type="RefSeq" id="YP_665610.1">
    <property type="nucleotide sequence ID" value="NC_008235.1"/>
</dbReference>
<dbReference type="SMR" id="Q14FA4"/>
<dbReference type="GeneID" id="4178235"/>
<dbReference type="KEGG" id="palz:4178235"/>
<dbReference type="OrthoDB" id="286at3646"/>
<dbReference type="GO" id="GO:0009535">
    <property type="term" value="C:chloroplast thylakoid membrane"/>
    <property type="evidence" value="ECO:0007669"/>
    <property type="project" value="UniProtKB-SubCell"/>
</dbReference>
<dbReference type="GO" id="GO:0051539">
    <property type="term" value="F:4 iron, 4 sulfur cluster binding"/>
    <property type="evidence" value="ECO:0007669"/>
    <property type="project" value="UniProtKB-KW"/>
</dbReference>
<dbReference type="GO" id="GO:0005506">
    <property type="term" value="F:iron ion binding"/>
    <property type="evidence" value="ECO:0007669"/>
    <property type="project" value="UniProtKB-UniRule"/>
</dbReference>
<dbReference type="GO" id="GO:0008137">
    <property type="term" value="F:NADH dehydrogenase (ubiquinone) activity"/>
    <property type="evidence" value="ECO:0007669"/>
    <property type="project" value="InterPro"/>
</dbReference>
<dbReference type="GO" id="GO:0048038">
    <property type="term" value="F:quinone binding"/>
    <property type="evidence" value="ECO:0007669"/>
    <property type="project" value="UniProtKB-KW"/>
</dbReference>
<dbReference type="GO" id="GO:0019684">
    <property type="term" value="P:photosynthesis, light reaction"/>
    <property type="evidence" value="ECO:0007669"/>
    <property type="project" value="UniProtKB-UniRule"/>
</dbReference>
<dbReference type="FunFam" id="3.30.70.3270:FF:000006">
    <property type="entry name" value="NAD(P)H-quinone oxidoreductase subunit I, chloroplastic"/>
    <property type="match status" value="1"/>
</dbReference>
<dbReference type="Gene3D" id="3.30.70.3270">
    <property type="match status" value="1"/>
</dbReference>
<dbReference type="HAMAP" id="MF_01351">
    <property type="entry name" value="NDH1_NuoI"/>
    <property type="match status" value="1"/>
</dbReference>
<dbReference type="InterPro" id="IPR017896">
    <property type="entry name" value="4Fe4S_Fe-S-bd"/>
</dbReference>
<dbReference type="InterPro" id="IPR017900">
    <property type="entry name" value="4Fe4S_Fe_S_CS"/>
</dbReference>
<dbReference type="InterPro" id="IPR010226">
    <property type="entry name" value="NADH_quinone_OxRdtase_chainI"/>
</dbReference>
<dbReference type="InterPro" id="IPR004497">
    <property type="entry name" value="NDHI"/>
</dbReference>
<dbReference type="NCBIfam" id="TIGR00403">
    <property type="entry name" value="ndhI"/>
    <property type="match status" value="1"/>
</dbReference>
<dbReference type="NCBIfam" id="TIGR01971">
    <property type="entry name" value="NuoI"/>
    <property type="match status" value="1"/>
</dbReference>
<dbReference type="NCBIfam" id="NF004537">
    <property type="entry name" value="PRK05888.1-3"/>
    <property type="match status" value="1"/>
</dbReference>
<dbReference type="PANTHER" id="PTHR47275">
    <property type="entry name" value="NAD(P)H-QUINONE OXIDOREDUCTASE SUBUNIT I, CHLOROPLASTIC"/>
    <property type="match status" value="1"/>
</dbReference>
<dbReference type="PANTHER" id="PTHR47275:SF1">
    <property type="entry name" value="NAD(P)H-QUINONE OXIDOREDUCTASE SUBUNIT I, CHLOROPLASTIC"/>
    <property type="match status" value="1"/>
</dbReference>
<dbReference type="Pfam" id="PF13187">
    <property type="entry name" value="Fer4_9"/>
    <property type="match status" value="1"/>
</dbReference>
<dbReference type="SUPFAM" id="SSF54862">
    <property type="entry name" value="4Fe-4S ferredoxins"/>
    <property type="match status" value="1"/>
</dbReference>
<dbReference type="PROSITE" id="PS00198">
    <property type="entry name" value="4FE4S_FER_1"/>
    <property type="match status" value="2"/>
</dbReference>
<dbReference type="PROSITE" id="PS51379">
    <property type="entry name" value="4FE4S_FER_2"/>
    <property type="match status" value="2"/>
</dbReference>
<feature type="chain" id="PRO_0000250837" description="NAD(P)H-quinone oxidoreductase subunit I, chloroplastic">
    <location>
        <begin position="1"/>
        <end position="176"/>
    </location>
</feature>
<feature type="domain" description="4Fe-4S ferredoxin-type 1" evidence="1">
    <location>
        <begin position="55"/>
        <end position="84"/>
    </location>
</feature>
<feature type="domain" description="4Fe-4S ferredoxin-type 2" evidence="1">
    <location>
        <begin position="95"/>
        <end position="124"/>
    </location>
</feature>
<feature type="binding site" evidence="1">
    <location>
        <position position="64"/>
    </location>
    <ligand>
        <name>[4Fe-4S] cluster</name>
        <dbReference type="ChEBI" id="CHEBI:49883"/>
        <label>1</label>
    </ligand>
</feature>
<feature type="binding site" evidence="1">
    <location>
        <position position="67"/>
    </location>
    <ligand>
        <name>[4Fe-4S] cluster</name>
        <dbReference type="ChEBI" id="CHEBI:49883"/>
        <label>1</label>
    </ligand>
</feature>
<feature type="binding site" evidence="1">
    <location>
        <position position="70"/>
    </location>
    <ligand>
        <name>[4Fe-4S] cluster</name>
        <dbReference type="ChEBI" id="CHEBI:49883"/>
        <label>1</label>
    </ligand>
</feature>
<feature type="binding site" evidence="1">
    <location>
        <position position="74"/>
    </location>
    <ligand>
        <name>[4Fe-4S] cluster</name>
        <dbReference type="ChEBI" id="CHEBI:49883"/>
        <label>2</label>
    </ligand>
</feature>
<feature type="binding site" evidence="1">
    <location>
        <position position="104"/>
    </location>
    <ligand>
        <name>[4Fe-4S] cluster</name>
        <dbReference type="ChEBI" id="CHEBI:49883"/>
        <label>2</label>
    </ligand>
</feature>
<feature type="binding site" evidence="1">
    <location>
        <position position="107"/>
    </location>
    <ligand>
        <name>[4Fe-4S] cluster</name>
        <dbReference type="ChEBI" id="CHEBI:49883"/>
        <label>2</label>
    </ligand>
</feature>
<feature type="binding site" evidence="1">
    <location>
        <position position="110"/>
    </location>
    <ligand>
        <name>[4Fe-4S] cluster</name>
        <dbReference type="ChEBI" id="CHEBI:49883"/>
        <label>2</label>
    </ligand>
</feature>
<feature type="binding site" evidence="1">
    <location>
        <position position="114"/>
    </location>
    <ligand>
        <name>[4Fe-4S] cluster</name>
        <dbReference type="ChEBI" id="CHEBI:49883"/>
        <label>1</label>
    </ligand>
</feature>
<name>NDHI_POPAL</name>